<sequence>MTDAPFDRADIDALLDARHPDPFACLGPHRVGDATVVRTLLPGALRVRAIAAGGGVLGELRQVDPAGCFAGALPDGRERGERPRYRLSIDWPDARQDVEDAYAFGTLLDEDALARFAAGDPRAALACLGARALDMDGVPGVRFAVWAPGASRVSVVGDFNGWDARRHPMRLRRPWGVWELFVPRIGAGERYKFALRARDGAALPLKADPCACRTEAPPRTASIVADLDALERFGWHDDAWLRARASLDLAHAPVSIYEVHPESWLRVAAEGNRSATWDELAQRLIPYAAGMGFSHVELTPIAEYPFGGSWGYQSLSPFAPSARFGPPEGFARFVEHAHAAGLGVIVDWVPAHFPDDPHGLGKFDGTALFEHADPREGWHPDWHTHVFNVGRREVGAFLIASALAWAHRYHVDGIRVDAVASMLYRDYSRAAGEWVPNVYGGRENLESIAFLKHFNDTLHGPAAPPGVATFAEESTAWPGVTAPTAEHGLGFDFKWNMGWMHDTLAYLREDPIHRRHHHDRLTFGLVYAFSERFVLPLSHDEVVHGKGSLAAKMPGDAWQRLANLRAYFGFMWAHPGKKLLFMGGEFAQWGEFAHDATPQWDLLDAPAHRGVQRLVRDLNRLHAAEPALHALDDRPAGFAWLVGDDRNNSVFAFVRRDDAGRMLVAVCNFTPVPRTDYRLGLPAPGRWAEVLNTDGAAYGGTDAGNGGALQADEIPAHGERWSAALRLPPLATLWLRPA</sequence>
<reference key="1">
    <citation type="journal article" date="2010" name="Genome Biol. Evol.">
        <title>Continuing evolution of Burkholderia mallei through genome reduction and large-scale rearrangements.</title>
        <authorList>
            <person name="Losada L."/>
            <person name="Ronning C.M."/>
            <person name="DeShazer D."/>
            <person name="Woods D."/>
            <person name="Fedorova N."/>
            <person name="Kim H.S."/>
            <person name="Shabalina S.A."/>
            <person name="Pearson T.R."/>
            <person name="Brinkac L."/>
            <person name="Tan P."/>
            <person name="Nandi T."/>
            <person name="Crabtree J."/>
            <person name="Badger J."/>
            <person name="Beckstrom-Sternberg S."/>
            <person name="Saqib M."/>
            <person name="Schutzer S.E."/>
            <person name="Keim P."/>
            <person name="Nierman W.C."/>
        </authorList>
    </citation>
    <scope>NUCLEOTIDE SEQUENCE [LARGE SCALE GENOMIC DNA]</scope>
    <source>
        <strain>1710b</strain>
    </source>
</reference>
<gene>
    <name evidence="1" type="primary">glgB</name>
    <name type="ordered locus">BURPS1710b_1737</name>
</gene>
<protein>
    <recommendedName>
        <fullName evidence="1">1,4-alpha-glucan branching enzyme GlgB</fullName>
        <ecNumber evidence="1">2.4.1.18</ecNumber>
    </recommendedName>
    <alternativeName>
        <fullName evidence="1">1,4-alpha-D-glucan:1,4-alpha-D-glucan 6-glucosyl-transferase</fullName>
    </alternativeName>
    <alternativeName>
        <fullName evidence="1">Alpha-(1-&gt;4)-glucan branching enzyme</fullName>
    </alternativeName>
    <alternativeName>
        <fullName evidence="1">Glycogen branching enzyme</fullName>
        <shortName evidence="1">BE</shortName>
    </alternativeName>
</protein>
<dbReference type="EC" id="2.4.1.18" evidence="1"/>
<dbReference type="EMBL" id="CP000124">
    <property type="protein sequence ID" value="ABA50427.1"/>
    <property type="molecule type" value="Genomic_DNA"/>
</dbReference>
<dbReference type="RefSeq" id="WP_004526721.1">
    <property type="nucleotide sequence ID" value="NC_007434.1"/>
</dbReference>
<dbReference type="SMR" id="Q3JTG5"/>
<dbReference type="CAZy" id="CBM48">
    <property type="family name" value="Carbohydrate-Binding Module Family 48"/>
</dbReference>
<dbReference type="CAZy" id="GH13">
    <property type="family name" value="Glycoside Hydrolase Family 13"/>
</dbReference>
<dbReference type="EnsemblBacteria" id="ABA50427">
    <property type="protein sequence ID" value="ABA50427"/>
    <property type="gene ID" value="BURPS1710b_1737"/>
</dbReference>
<dbReference type="KEGG" id="bpm:BURPS1710b_1737"/>
<dbReference type="HOGENOM" id="CLU_004245_3_2_4"/>
<dbReference type="UniPathway" id="UPA00164"/>
<dbReference type="Proteomes" id="UP000002700">
    <property type="component" value="Chromosome I"/>
</dbReference>
<dbReference type="GO" id="GO:0005829">
    <property type="term" value="C:cytosol"/>
    <property type="evidence" value="ECO:0007669"/>
    <property type="project" value="TreeGrafter"/>
</dbReference>
<dbReference type="GO" id="GO:0003844">
    <property type="term" value="F:1,4-alpha-glucan branching enzyme activity"/>
    <property type="evidence" value="ECO:0007669"/>
    <property type="project" value="UniProtKB-UniRule"/>
</dbReference>
<dbReference type="GO" id="GO:0043169">
    <property type="term" value="F:cation binding"/>
    <property type="evidence" value="ECO:0007669"/>
    <property type="project" value="InterPro"/>
</dbReference>
<dbReference type="GO" id="GO:0004553">
    <property type="term" value="F:hydrolase activity, hydrolyzing O-glycosyl compounds"/>
    <property type="evidence" value="ECO:0007669"/>
    <property type="project" value="InterPro"/>
</dbReference>
<dbReference type="GO" id="GO:0005978">
    <property type="term" value="P:glycogen biosynthetic process"/>
    <property type="evidence" value="ECO:0007669"/>
    <property type="project" value="UniProtKB-UniRule"/>
</dbReference>
<dbReference type="CDD" id="cd11322">
    <property type="entry name" value="AmyAc_Glg_BE"/>
    <property type="match status" value="1"/>
</dbReference>
<dbReference type="CDD" id="cd02855">
    <property type="entry name" value="E_set_GBE_prok_N"/>
    <property type="match status" value="1"/>
</dbReference>
<dbReference type="FunFam" id="2.60.40.1180:FF:000002">
    <property type="entry name" value="1,4-alpha-glucan branching enzyme GlgB"/>
    <property type="match status" value="1"/>
</dbReference>
<dbReference type="FunFam" id="3.20.20.80:FF:000003">
    <property type="entry name" value="1,4-alpha-glucan branching enzyme GlgB"/>
    <property type="match status" value="1"/>
</dbReference>
<dbReference type="Gene3D" id="3.20.20.80">
    <property type="entry name" value="Glycosidases"/>
    <property type="match status" value="1"/>
</dbReference>
<dbReference type="Gene3D" id="2.60.40.1180">
    <property type="entry name" value="Golgi alpha-mannosidase II"/>
    <property type="match status" value="1"/>
</dbReference>
<dbReference type="Gene3D" id="2.60.40.10">
    <property type="entry name" value="Immunoglobulins"/>
    <property type="match status" value="1"/>
</dbReference>
<dbReference type="HAMAP" id="MF_00685">
    <property type="entry name" value="GlgB"/>
    <property type="match status" value="1"/>
</dbReference>
<dbReference type="InterPro" id="IPR006048">
    <property type="entry name" value="A-amylase/branching_C"/>
</dbReference>
<dbReference type="InterPro" id="IPR037439">
    <property type="entry name" value="Branching_enzy"/>
</dbReference>
<dbReference type="InterPro" id="IPR006407">
    <property type="entry name" value="GlgB"/>
</dbReference>
<dbReference type="InterPro" id="IPR054169">
    <property type="entry name" value="GlgB_N"/>
</dbReference>
<dbReference type="InterPro" id="IPR044143">
    <property type="entry name" value="GlgB_N_E_set_prok"/>
</dbReference>
<dbReference type="InterPro" id="IPR006047">
    <property type="entry name" value="Glyco_hydro_13_cat_dom"/>
</dbReference>
<dbReference type="InterPro" id="IPR004193">
    <property type="entry name" value="Glyco_hydro_13_N"/>
</dbReference>
<dbReference type="InterPro" id="IPR013780">
    <property type="entry name" value="Glyco_hydro_b"/>
</dbReference>
<dbReference type="InterPro" id="IPR017853">
    <property type="entry name" value="Glycoside_hydrolase_SF"/>
</dbReference>
<dbReference type="InterPro" id="IPR013783">
    <property type="entry name" value="Ig-like_fold"/>
</dbReference>
<dbReference type="InterPro" id="IPR014756">
    <property type="entry name" value="Ig_E-set"/>
</dbReference>
<dbReference type="NCBIfam" id="TIGR01515">
    <property type="entry name" value="branching_enzym"/>
    <property type="match status" value="1"/>
</dbReference>
<dbReference type="NCBIfam" id="NF003811">
    <property type="entry name" value="PRK05402.1"/>
    <property type="match status" value="1"/>
</dbReference>
<dbReference type="NCBIfam" id="NF008967">
    <property type="entry name" value="PRK12313.1"/>
    <property type="match status" value="1"/>
</dbReference>
<dbReference type="PANTHER" id="PTHR43651">
    <property type="entry name" value="1,4-ALPHA-GLUCAN-BRANCHING ENZYME"/>
    <property type="match status" value="1"/>
</dbReference>
<dbReference type="PANTHER" id="PTHR43651:SF3">
    <property type="entry name" value="1,4-ALPHA-GLUCAN-BRANCHING ENZYME"/>
    <property type="match status" value="1"/>
</dbReference>
<dbReference type="Pfam" id="PF02806">
    <property type="entry name" value="Alpha-amylase_C"/>
    <property type="match status" value="1"/>
</dbReference>
<dbReference type="Pfam" id="PF02922">
    <property type="entry name" value="CBM_48"/>
    <property type="match status" value="1"/>
</dbReference>
<dbReference type="Pfam" id="PF22019">
    <property type="entry name" value="GlgB_N"/>
    <property type="match status" value="1"/>
</dbReference>
<dbReference type="PIRSF" id="PIRSF000463">
    <property type="entry name" value="GlgB"/>
    <property type="match status" value="1"/>
</dbReference>
<dbReference type="SMART" id="SM00642">
    <property type="entry name" value="Aamy"/>
    <property type="match status" value="1"/>
</dbReference>
<dbReference type="SUPFAM" id="SSF51445">
    <property type="entry name" value="(Trans)glycosidases"/>
    <property type="match status" value="1"/>
</dbReference>
<dbReference type="SUPFAM" id="SSF81296">
    <property type="entry name" value="E set domains"/>
    <property type="match status" value="1"/>
</dbReference>
<dbReference type="SUPFAM" id="SSF51011">
    <property type="entry name" value="Glycosyl hydrolase domain"/>
    <property type="match status" value="1"/>
</dbReference>
<evidence type="ECO:0000255" key="1">
    <source>
        <dbReference type="HAMAP-Rule" id="MF_00685"/>
    </source>
</evidence>
<name>GLGB_BURP1</name>
<comment type="function">
    <text evidence="1">Catalyzes the formation of the alpha-1,6-glucosidic linkages in glycogen by scission of a 1,4-alpha-linked oligosaccharide from growing alpha-1,4-glucan chains and the subsequent attachment of the oligosaccharide to the alpha-1,6 position.</text>
</comment>
<comment type="catalytic activity">
    <reaction evidence="1">
        <text>Transfers a segment of a (1-&gt;4)-alpha-D-glucan chain to a primary hydroxy group in a similar glucan chain.</text>
        <dbReference type="EC" id="2.4.1.18"/>
    </reaction>
</comment>
<comment type="pathway">
    <text evidence="1">Glycan biosynthesis; glycogen biosynthesis.</text>
</comment>
<comment type="subunit">
    <text evidence="1">Monomer.</text>
</comment>
<comment type="similarity">
    <text evidence="1">Belongs to the glycosyl hydrolase 13 family. GlgB subfamily.</text>
</comment>
<feature type="chain" id="PRO_0000260638" description="1,4-alpha-glucan branching enzyme GlgB">
    <location>
        <begin position="1"/>
        <end position="738"/>
    </location>
</feature>
<feature type="active site" description="Nucleophile" evidence="1">
    <location>
        <position position="417"/>
    </location>
</feature>
<feature type="active site" description="Proton donor" evidence="1">
    <location>
        <position position="472"/>
    </location>
</feature>
<accession>Q3JTG5</accession>
<proteinExistence type="inferred from homology"/>
<keyword id="KW-0119">Carbohydrate metabolism</keyword>
<keyword id="KW-0320">Glycogen biosynthesis</keyword>
<keyword id="KW-0321">Glycogen metabolism</keyword>
<keyword id="KW-0328">Glycosyltransferase</keyword>
<keyword id="KW-0808">Transferase</keyword>
<organism>
    <name type="scientific">Burkholderia pseudomallei (strain 1710b)</name>
    <dbReference type="NCBI Taxonomy" id="320372"/>
    <lineage>
        <taxon>Bacteria</taxon>
        <taxon>Pseudomonadati</taxon>
        <taxon>Pseudomonadota</taxon>
        <taxon>Betaproteobacteria</taxon>
        <taxon>Burkholderiales</taxon>
        <taxon>Burkholderiaceae</taxon>
        <taxon>Burkholderia</taxon>
        <taxon>pseudomallei group</taxon>
    </lineage>
</organism>